<name>GATC_DROPS</name>
<organism>
    <name type="scientific">Drosophila pseudoobscura pseudoobscura</name>
    <name type="common">Fruit fly</name>
    <dbReference type="NCBI Taxonomy" id="46245"/>
    <lineage>
        <taxon>Eukaryota</taxon>
        <taxon>Metazoa</taxon>
        <taxon>Ecdysozoa</taxon>
        <taxon>Arthropoda</taxon>
        <taxon>Hexapoda</taxon>
        <taxon>Insecta</taxon>
        <taxon>Pterygota</taxon>
        <taxon>Neoptera</taxon>
        <taxon>Endopterygota</taxon>
        <taxon>Diptera</taxon>
        <taxon>Brachycera</taxon>
        <taxon>Muscomorpha</taxon>
        <taxon>Ephydroidea</taxon>
        <taxon>Drosophilidae</taxon>
        <taxon>Drosophila</taxon>
        <taxon>Sophophora</taxon>
    </lineage>
</organism>
<gene>
    <name type="ORF">GA29066</name>
</gene>
<keyword id="KW-0067">ATP-binding</keyword>
<keyword id="KW-0436">Ligase</keyword>
<keyword id="KW-0496">Mitochondrion</keyword>
<keyword id="KW-0547">Nucleotide-binding</keyword>
<keyword id="KW-0648">Protein biosynthesis</keyword>
<keyword id="KW-1185">Reference proteome</keyword>
<proteinExistence type="inferred from homology"/>
<accession>B5DK05</accession>
<dbReference type="EC" id="6.3.5.-" evidence="1"/>
<dbReference type="EMBL" id="CH379061">
    <property type="protein sequence ID" value="EDY70631.1"/>
    <property type="molecule type" value="Genomic_DNA"/>
</dbReference>
<dbReference type="RefSeq" id="XP_002133229.1">
    <property type="nucleotide sequence ID" value="XM_002133193.2"/>
</dbReference>
<dbReference type="SMR" id="B5DK05"/>
<dbReference type="FunCoup" id="B5DK05">
    <property type="interactions" value="1160"/>
</dbReference>
<dbReference type="STRING" id="46245.B5DK05"/>
<dbReference type="EnsemblMetazoa" id="FBtr0370258">
    <property type="protein sequence ID" value="FBpp0332674"/>
    <property type="gene ID" value="FBgn0250424"/>
</dbReference>
<dbReference type="KEGG" id="dpo:6902715"/>
<dbReference type="CTD" id="283459"/>
<dbReference type="eggNOG" id="KOG4247">
    <property type="taxonomic scope" value="Eukaryota"/>
</dbReference>
<dbReference type="HOGENOM" id="CLU_105899_0_1_1"/>
<dbReference type="InParanoid" id="B5DK05"/>
<dbReference type="OMA" id="RCAKRTD"/>
<dbReference type="Proteomes" id="UP000001819">
    <property type="component" value="Chromosome 4"/>
</dbReference>
<dbReference type="Bgee" id="FBgn0250424">
    <property type="expression patterns" value="Expressed in female reproductive system and 2 other cell types or tissues"/>
</dbReference>
<dbReference type="GO" id="GO:0030956">
    <property type="term" value="C:glutamyl-tRNA(Gln) amidotransferase complex"/>
    <property type="evidence" value="ECO:0007669"/>
    <property type="project" value="UniProtKB-UniRule"/>
</dbReference>
<dbReference type="GO" id="GO:0005739">
    <property type="term" value="C:mitochondrion"/>
    <property type="evidence" value="ECO:0007669"/>
    <property type="project" value="UniProtKB-SubCell"/>
</dbReference>
<dbReference type="GO" id="GO:0005524">
    <property type="term" value="F:ATP binding"/>
    <property type="evidence" value="ECO:0007669"/>
    <property type="project" value="UniProtKB-KW"/>
</dbReference>
<dbReference type="GO" id="GO:0050567">
    <property type="term" value="F:glutaminyl-tRNA synthase (glutamine-hydrolyzing) activity"/>
    <property type="evidence" value="ECO:0007669"/>
    <property type="project" value="UniProtKB-UniRule"/>
</dbReference>
<dbReference type="GO" id="GO:0070681">
    <property type="term" value="P:glutaminyl-tRNAGln biosynthesis via transamidation"/>
    <property type="evidence" value="ECO:0007669"/>
    <property type="project" value="UniProtKB-UniRule"/>
</dbReference>
<dbReference type="GO" id="GO:0032543">
    <property type="term" value="P:mitochondrial translation"/>
    <property type="evidence" value="ECO:0007669"/>
    <property type="project" value="UniProtKB-UniRule"/>
</dbReference>
<dbReference type="GO" id="GO:0006450">
    <property type="term" value="P:regulation of translational fidelity"/>
    <property type="evidence" value="ECO:0007669"/>
    <property type="project" value="InterPro"/>
</dbReference>
<dbReference type="HAMAP" id="MF_00122">
    <property type="entry name" value="GatC"/>
    <property type="match status" value="1"/>
</dbReference>
<dbReference type="InterPro" id="IPR036113">
    <property type="entry name" value="Asp/Glu-ADT_sf_sub_c"/>
</dbReference>
<dbReference type="InterPro" id="IPR003837">
    <property type="entry name" value="GatC"/>
</dbReference>
<dbReference type="NCBIfam" id="TIGR00135">
    <property type="entry name" value="gatC"/>
    <property type="match status" value="1"/>
</dbReference>
<dbReference type="PANTHER" id="PTHR15004">
    <property type="entry name" value="GLUTAMYL-TRNA(GLN) AMIDOTRANSFERASE SUBUNIT C, MITOCHONDRIAL"/>
    <property type="match status" value="1"/>
</dbReference>
<dbReference type="PANTHER" id="PTHR15004:SF0">
    <property type="entry name" value="GLUTAMYL-TRNA(GLN) AMIDOTRANSFERASE SUBUNIT C, MITOCHONDRIAL"/>
    <property type="match status" value="1"/>
</dbReference>
<dbReference type="Pfam" id="PF02686">
    <property type="entry name" value="GatC"/>
    <property type="match status" value="1"/>
</dbReference>
<dbReference type="SUPFAM" id="SSF141000">
    <property type="entry name" value="Glu-tRNAGln amidotransferase C subunit"/>
    <property type="match status" value="1"/>
</dbReference>
<comment type="function">
    <text evidence="1">Allows the formation of correctly charged Gln-tRNA(Gln) through the transamidation of misacylated Glu-tRNA(Gln) in the mitochondria. The reaction takes place in the presence of glutamine and ATP through an activated gamma-phospho-Glu-tRNA(Gln).</text>
</comment>
<comment type="catalytic activity">
    <reaction evidence="1">
        <text>L-glutamyl-tRNA(Gln) + L-glutamine + ATP + H2O = L-glutaminyl-tRNA(Gln) + L-glutamate + ADP + phosphate + H(+)</text>
        <dbReference type="Rhea" id="RHEA:17521"/>
        <dbReference type="Rhea" id="RHEA-COMP:9681"/>
        <dbReference type="Rhea" id="RHEA-COMP:9684"/>
        <dbReference type="ChEBI" id="CHEBI:15377"/>
        <dbReference type="ChEBI" id="CHEBI:15378"/>
        <dbReference type="ChEBI" id="CHEBI:29985"/>
        <dbReference type="ChEBI" id="CHEBI:30616"/>
        <dbReference type="ChEBI" id="CHEBI:43474"/>
        <dbReference type="ChEBI" id="CHEBI:58359"/>
        <dbReference type="ChEBI" id="CHEBI:78520"/>
        <dbReference type="ChEBI" id="CHEBI:78521"/>
        <dbReference type="ChEBI" id="CHEBI:456216"/>
    </reaction>
</comment>
<comment type="subunit">
    <text evidence="1">Subunit of the heterotrimeric GatCAB amidotransferase (AdT) complex, composed of A, B and C subunits.</text>
</comment>
<comment type="subcellular location">
    <subcellularLocation>
        <location evidence="1">Mitochondrion</location>
    </subcellularLocation>
</comment>
<comment type="miscellaneous">
    <text evidence="1">This protein may be expected to contain an N-terminal transit peptide but none has been predicted.</text>
</comment>
<comment type="similarity">
    <text evidence="1">Belongs to the GatC family.</text>
</comment>
<feature type="chain" id="PRO_0000413306" description="Glutamyl-tRNA(Gln) amidotransferase subunit C, mitochondrial">
    <location>
        <begin position="1"/>
        <end position="148"/>
    </location>
</feature>
<reference key="1">
    <citation type="journal article" date="2005" name="Genome Res.">
        <title>Comparative genome sequencing of Drosophila pseudoobscura: chromosomal, gene, and cis-element evolution.</title>
        <authorList>
            <person name="Richards S."/>
            <person name="Liu Y."/>
            <person name="Bettencourt B.R."/>
            <person name="Hradecky P."/>
            <person name="Letovsky S."/>
            <person name="Nielsen R."/>
            <person name="Thornton K."/>
            <person name="Hubisz M.J."/>
            <person name="Chen R."/>
            <person name="Meisel R.P."/>
            <person name="Couronne O."/>
            <person name="Hua S."/>
            <person name="Smith M.A."/>
            <person name="Zhang P."/>
            <person name="Liu J."/>
            <person name="Bussemaker H.J."/>
            <person name="van Batenburg M.F."/>
            <person name="Howells S.L."/>
            <person name="Scherer S.E."/>
            <person name="Sodergren E."/>
            <person name="Matthews B.B."/>
            <person name="Crosby M.A."/>
            <person name="Schroeder A.J."/>
            <person name="Ortiz-Barrientos D."/>
            <person name="Rives C.M."/>
            <person name="Metzker M.L."/>
            <person name="Muzny D.M."/>
            <person name="Scott G."/>
            <person name="Steffen D."/>
            <person name="Wheeler D.A."/>
            <person name="Worley K.C."/>
            <person name="Havlak P."/>
            <person name="Durbin K.J."/>
            <person name="Egan A."/>
            <person name="Gill R."/>
            <person name="Hume J."/>
            <person name="Morgan M.B."/>
            <person name="Miner G."/>
            <person name="Hamilton C."/>
            <person name="Huang Y."/>
            <person name="Waldron L."/>
            <person name="Verduzco D."/>
            <person name="Clerc-Blankenburg K.P."/>
            <person name="Dubchak I."/>
            <person name="Noor M.A.F."/>
            <person name="Anderson W."/>
            <person name="White K.P."/>
            <person name="Clark A.G."/>
            <person name="Schaeffer S.W."/>
            <person name="Gelbart W.M."/>
            <person name="Weinstock G.M."/>
            <person name="Gibbs R.A."/>
        </authorList>
    </citation>
    <scope>NUCLEOTIDE SEQUENCE [LARGE SCALE GENOMIC DNA]</scope>
    <source>
        <strain>MV2-25 / Tucson 14011-0121.94</strain>
    </source>
</reference>
<evidence type="ECO:0000255" key="1">
    <source>
        <dbReference type="HAMAP-Rule" id="MF_03149"/>
    </source>
</evidence>
<sequence>MLRVLSRRFYCKIAAKTNFKTAKLDFKELRYATKVPQTPVDTVFPETNANRVEIDAKTIQLLERLSLVNLDSEQALATLNSSIQFADKIAHINTENVRPLYTVLENQQLQLRNDEVKEGDCRVELLRNAKVTDEDYYVSPPGNIPLEQ</sequence>
<protein>
    <recommendedName>
        <fullName evidence="1">Glutamyl-tRNA(Gln) amidotransferase subunit C, mitochondrial</fullName>
        <shortName evidence="1">Glu-AdT subunit C</shortName>
        <ecNumber evidence="1">6.3.5.-</ecNumber>
    </recommendedName>
</protein>